<gene>
    <name type="primary">GOLGA7B</name>
</gene>
<keyword id="KW-1003">Cell membrane</keyword>
<keyword id="KW-0333">Golgi apparatus</keyword>
<keyword id="KW-0449">Lipoprotein</keyword>
<keyword id="KW-0472">Membrane</keyword>
<keyword id="KW-0564">Palmitate</keyword>
<keyword id="KW-1185">Reference proteome</keyword>
<comment type="function">
    <text evidence="2">Play a role in cell adhesion by regulating the plasma membrane localization of the palmitoyltransferase ZDHHC5. May be involved in protein transport from Golgi to cell surface.</text>
</comment>
<comment type="interaction">
    <interactant intactId="EBI-25635843">
        <id>Q9D428</id>
    </interactant>
    <interactant intactId="EBI-7057556">
        <id>Q8VDZ4</id>
        <label>Zdhhc5</label>
    </interactant>
    <organismsDiffer>false</organismsDiffer>
    <experiments>2</experiments>
</comment>
<comment type="subcellular location">
    <subcellularLocation>
        <location evidence="2">Cell membrane</location>
    </subcellularLocation>
    <subcellularLocation>
        <location evidence="2">Golgi apparatus membrane</location>
        <topology evidence="2">Lipid-anchor</topology>
    </subcellularLocation>
</comment>
<comment type="PTM">
    <text evidence="2">Palmitoylated by ZDHHC5. Palmitoylation is required for the maintenance of ZDHHC5 at the plasma membrane.</text>
</comment>
<comment type="similarity">
    <text evidence="4">Belongs to the ERF4 family.</text>
</comment>
<comment type="sequence caution" evidence="4">
    <conflict type="erroneous initiation">
        <sequence resource="EMBL-CDS" id="BAE23972"/>
    </conflict>
    <text>Extended N-terminus.</text>
</comment>
<feature type="chain" id="PRO_0000244091" description="Golgin subfamily A member 7B">
    <location>
        <begin position="1"/>
        <end position="167"/>
    </location>
</feature>
<feature type="region of interest" description="Disordered" evidence="3">
    <location>
        <begin position="140"/>
        <end position="167"/>
    </location>
</feature>
<feature type="compositionally biased region" description="Low complexity" evidence="3">
    <location>
        <begin position="142"/>
        <end position="157"/>
    </location>
</feature>
<feature type="compositionally biased region" description="Gly residues" evidence="3">
    <location>
        <begin position="158"/>
        <end position="167"/>
    </location>
</feature>
<feature type="lipid moiety-binding region" description="S-palmitoyl cysteine" evidence="1">
    <location>
        <position position="78"/>
    </location>
</feature>
<feature type="lipid moiety-binding region" description="S-palmitoyl cysteine" evidence="1">
    <location>
        <position position="81"/>
    </location>
</feature>
<name>GOG7B_MOUSE</name>
<sequence>MATEVHNLQELRRSASLATKVFIQRDYSDGTICQFQTKFPPELDSRIERQLFEETVKTLNGFYAEAEKIGGSSYLEGCLACATAYFIFLCMETHYEKVLKKISRYIQEQNEKVFAPRGLLLTDPVERGMRVIEISIYEDRCSSGSSSSGSSSGSGSSSAGGGGAGAR</sequence>
<evidence type="ECO:0000250" key="1"/>
<evidence type="ECO:0000250" key="2">
    <source>
        <dbReference type="UniProtKB" id="Q2TAP0"/>
    </source>
</evidence>
<evidence type="ECO:0000256" key="3">
    <source>
        <dbReference type="SAM" id="MobiDB-lite"/>
    </source>
</evidence>
<evidence type="ECO:0000305" key="4"/>
<accession>Q9D428</accession>
<accession>A8Y5D0</accession>
<accession>Q3UTK8</accession>
<proteinExistence type="evidence at protein level"/>
<organism>
    <name type="scientific">Mus musculus</name>
    <name type="common">Mouse</name>
    <dbReference type="NCBI Taxonomy" id="10090"/>
    <lineage>
        <taxon>Eukaryota</taxon>
        <taxon>Metazoa</taxon>
        <taxon>Chordata</taxon>
        <taxon>Craniata</taxon>
        <taxon>Vertebrata</taxon>
        <taxon>Euteleostomi</taxon>
        <taxon>Mammalia</taxon>
        <taxon>Eutheria</taxon>
        <taxon>Euarchontoglires</taxon>
        <taxon>Glires</taxon>
        <taxon>Rodentia</taxon>
        <taxon>Myomorpha</taxon>
        <taxon>Muroidea</taxon>
        <taxon>Muridae</taxon>
        <taxon>Murinae</taxon>
        <taxon>Mus</taxon>
        <taxon>Mus</taxon>
    </lineage>
</organism>
<reference key="1">
    <citation type="journal article" date="2005" name="Science">
        <title>The transcriptional landscape of the mammalian genome.</title>
        <authorList>
            <person name="Carninci P."/>
            <person name="Kasukawa T."/>
            <person name="Katayama S."/>
            <person name="Gough J."/>
            <person name="Frith M.C."/>
            <person name="Maeda N."/>
            <person name="Oyama R."/>
            <person name="Ravasi T."/>
            <person name="Lenhard B."/>
            <person name="Wells C."/>
            <person name="Kodzius R."/>
            <person name="Shimokawa K."/>
            <person name="Bajic V.B."/>
            <person name="Brenner S.E."/>
            <person name="Batalov S."/>
            <person name="Forrest A.R."/>
            <person name="Zavolan M."/>
            <person name="Davis M.J."/>
            <person name="Wilming L.G."/>
            <person name="Aidinis V."/>
            <person name="Allen J.E."/>
            <person name="Ambesi-Impiombato A."/>
            <person name="Apweiler R."/>
            <person name="Aturaliya R.N."/>
            <person name="Bailey T.L."/>
            <person name="Bansal M."/>
            <person name="Baxter L."/>
            <person name="Beisel K.W."/>
            <person name="Bersano T."/>
            <person name="Bono H."/>
            <person name="Chalk A.M."/>
            <person name="Chiu K.P."/>
            <person name="Choudhary V."/>
            <person name="Christoffels A."/>
            <person name="Clutterbuck D.R."/>
            <person name="Crowe M.L."/>
            <person name="Dalla E."/>
            <person name="Dalrymple B.P."/>
            <person name="de Bono B."/>
            <person name="Della Gatta G."/>
            <person name="di Bernardo D."/>
            <person name="Down T."/>
            <person name="Engstrom P."/>
            <person name="Fagiolini M."/>
            <person name="Faulkner G."/>
            <person name="Fletcher C.F."/>
            <person name="Fukushima T."/>
            <person name="Furuno M."/>
            <person name="Futaki S."/>
            <person name="Gariboldi M."/>
            <person name="Georgii-Hemming P."/>
            <person name="Gingeras T.R."/>
            <person name="Gojobori T."/>
            <person name="Green R.E."/>
            <person name="Gustincich S."/>
            <person name="Harbers M."/>
            <person name="Hayashi Y."/>
            <person name="Hensch T.K."/>
            <person name="Hirokawa N."/>
            <person name="Hill D."/>
            <person name="Huminiecki L."/>
            <person name="Iacono M."/>
            <person name="Ikeo K."/>
            <person name="Iwama A."/>
            <person name="Ishikawa T."/>
            <person name="Jakt M."/>
            <person name="Kanapin A."/>
            <person name="Katoh M."/>
            <person name="Kawasawa Y."/>
            <person name="Kelso J."/>
            <person name="Kitamura H."/>
            <person name="Kitano H."/>
            <person name="Kollias G."/>
            <person name="Krishnan S.P."/>
            <person name="Kruger A."/>
            <person name="Kummerfeld S.K."/>
            <person name="Kurochkin I.V."/>
            <person name="Lareau L.F."/>
            <person name="Lazarevic D."/>
            <person name="Lipovich L."/>
            <person name="Liu J."/>
            <person name="Liuni S."/>
            <person name="McWilliam S."/>
            <person name="Madan Babu M."/>
            <person name="Madera M."/>
            <person name="Marchionni L."/>
            <person name="Matsuda H."/>
            <person name="Matsuzawa S."/>
            <person name="Miki H."/>
            <person name="Mignone F."/>
            <person name="Miyake S."/>
            <person name="Morris K."/>
            <person name="Mottagui-Tabar S."/>
            <person name="Mulder N."/>
            <person name="Nakano N."/>
            <person name="Nakauchi H."/>
            <person name="Ng P."/>
            <person name="Nilsson R."/>
            <person name="Nishiguchi S."/>
            <person name="Nishikawa S."/>
            <person name="Nori F."/>
            <person name="Ohara O."/>
            <person name="Okazaki Y."/>
            <person name="Orlando V."/>
            <person name="Pang K.C."/>
            <person name="Pavan W.J."/>
            <person name="Pavesi G."/>
            <person name="Pesole G."/>
            <person name="Petrovsky N."/>
            <person name="Piazza S."/>
            <person name="Reed J."/>
            <person name="Reid J.F."/>
            <person name="Ring B.Z."/>
            <person name="Ringwald M."/>
            <person name="Rost B."/>
            <person name="Ruan Y."/>
            <person name="Salzberg S.L."/>
            <person name="Sandelin A."/>
            <person name="Schneider C."/>
            <person name="Schoenbach C."/>
            <person name="Sekiguchi K."/>
            <person name="Semple C.A."/>
            <person name="Seno S."/>
            <person name="Sessa L."/>
            <person name="Sheng Y."/>
            <person name="Shibata Y."/>
            <person name="Shimada H."/>
            <person name="Shimada K."/>
            <person name="Silva D."/>
            <person name="Sinclair B."/>
            <person name="Sperling S."/>
            <person name="Stupka E."/>
            <person name="Sugiura K."/>
            <person name="Sultana R."/>
            <person name="Takenaka Y."/>
            <person name="Taki K."/>
            <person name="Tammoja K."/>
            <person name="Tan S.L."/>
            <person name="Tang S."/>
            <person name="Taylor M.S."/>
            <person name="Tegner J."/>
            <person name="Teichmann S.A."/>
            <person name="Ueda H.R."/>
            <person name="van Nimwegen E."/>
            <person name="Verardo R."/>
            <person name="Wei C.L."/>
            <person name="Yagi K."/>
            <person name="Yamanishi H."/>
            <person name="Zabarovsky E."/>
            <person name="Zhu S."/>
            <person name="Zimmer A."/>
            <person name="Hide W."/>
            <person name="Bult C."/>
            <person name="Grimmond S.M."/>
            <person name="Teasdale R.D."/>
            <person name="Liu E.T."/>
            <person name="Brusic V."/>
            <person name="Quackenbush J."/>
            <person name="Wahlestedt C."/>
            <person name="Mattick J.S."/>
            <person name="Hume D.A."/>
            <person name="Kai C."/>
            <person name="Sasaki D."/>
            <person name="Tomaru Y."/>
            <person name="Fukuda S."/>
            <person name="Kanamori-Katayama M."/>
            <person name="Suzuki M."/>
            <person name="Aoki J."/>
            <person name="Arakawa T."/>
            <person name="Iida J."/>
            <person name="Imamura K."/>
            <person name="Itoh M."/>
            <person name="Kato T."/>
            <person name="Kawaji H."/>
            <person name="Kawagashira N."/>
            <person name="Kawashima T."/>
            <person name="Kojima M."/>
            <person name="Kondo S."/>
            <person name="Konno H."/>
            <person name="Nakano K."/>
            <person name="Ninomiya N."/>
            <person name="Nishio T."/>
            <person name="Okada M."/>
            <person name="Plessy C."/>
            <person name="Shibata K."/>
            <person name="Shiraki T."/>
            <person name="Suzuki S."/>
            <person name="Tagami M."/>
            <person name="Waki K."/>
            <person name="Watahiki A."/>
            <person name="Okamura-Oho Y."/>
            <person name="Suzuki H."/>
            <person name="Kawai J."/>
            <person name="Hayashizaki Y."/>
        </authorList>
    </citation>
    <scope>NUCLEOTIDE SEQUENCE [LARGE SCALE MRNA]</scope>
    <source>
        <strain>C57BL/6J</strain>
        <tissue>Brain cortex</tissue>
        <tissue>Testis</tissue>
    </source>
</reference>
<reference key="2">
    <citation type="journal article" date="2009" name="PLoS Biol.">
        <title>Lineage-specific biology revealed by a finished genome assembly of the mouse.</title>
        <authorList>
            <person name="Church D.M."/>
            <person name="Goodstadt L."/>
            <person name="Hillier L.W."/>
            <person name="Zody M.C."/>
            <person name="Goldstein S."/>
            <person name="She X."/>
            <person name="Bult C.J."/>
            <person name="Agarwala R."/>
            <person name="Cherry J.L."/>
            <person name="DiCuccio M."/>
            <person name="Hlavina W."/>
            <person name="Kapustin Y."/>
            <person name="Meric P."/>
            <person name="Maglott D."/>
            <person name="Birtle Z."/>
            <person name="Marques A.C."/>
            <person name="Graves T."/>
            <person name="Zhou S."/>
            <person name="Teague B."/>
            <person name="Potamousis K."/>
            <person name="Churas C."/>
            <person name="Place M."/>
            <person name="Herschleb J."/>
            <person name="Runnheim R."/>
            <person name="Forrest D."/>
            <person name="Amos-Landgraf J."/>
            <person name="Schwartz D.C."/>
            <person name="Cheng Z."/>
            <person name="Lindblad-Toh K."/>
            <person name="Eichler E.E."/>
            <person name="Ponting C.P."/>
        </authorList>
    </citation>
    <scope>NUCLEOTIDE SEQUENCE [LARGE SCALE GENOMIC DNA]</scope>
    <source>
        <strain>C57BL/6J</strain>
    </source>
</reference>
<reference key="3">
    <citation type="journal article" date="2004" name="Genome Res.">
        <title>The status, quality, and expansion of the NIH full-length cDNA project: the Mammalian Gene Collection (MGC).</title>
        <authorList>
            <consortium name="The MGC Project Team"/>
        </authorList>
    </citation>
    <scope>NUCLEOTIDE SEQUENCE [LARGE SCALE MRNA]</scope>
    <source>
        <strain>C57BL/6J</strain>
        <tissue>Brain</tissue>
    </source>
</reference>
<reference key="4">
    <citation type="journal article" date="2006" name="Mol. Cell. Proteomics">
        <title>Comprehensive identification of phosphorylation sites in postsynaptic density preparations.</title>
        <authorList>
            <person name="Trinidad J.C."/>
            <person name="Specht C.G."/>
            <person name="Thalhammer A."/>
            <person name="Schoepfer R."/>
            <person name="Burlingame A.L."/>
        </authorList>
    </citation>
    <scope>IDENTIFICATION BY MASS SPECTROMETRY [LARGE SCALE ANALYSIS]</scope>
    <source>
        <tissue>Brain</tissue>
    </source>
</reference>
<protein>
    <recommendedName>
        <fullName>Golgin subfamily A member 7B</fullName>
    </recommendedName>
</protein>
<dbReference type="EMBL" id="AK016850">
    <property type="protein sequence ID" value="BAB30463.1"/>
    <property type="molecule type" value="mRNA"/>
</dbReference>
<dbReference type="EMBL" id="AK139354">
    <property type="protein sequence ID" value="BAE23972.1"/>
    <property type="status" value="ALT_INIT"/>
    <property type="molecule type" value="mRNA"/>
</dbReference>
<dbReference type="EMBL" id="AL603804">
    <property type="status" value="NOT_ANNOTATED_CDS"/>
    <property type="molecule type" value="Genomic_DNA"/>
</dbReference>
<dbReference type="EMBL" id="BC049116">
    <property type="protein sequence ID" value="AAH49116.1"/>
    <property type="molecule type" value="mRNA"/>
</dbReference>
<dbReference type="CCDS" id="CCDS29827.1"/>
<dbReference type="RefSeq" id="NP_001135455.1">
    <property type="nucleotide sequence ID" value="NM_001141983.1"/>
</dbReference>
<dbReference type="RefSeq" id="NP_081970.1">
    <property type="nucleotide sequence ID" value="NM_027694.2"/>
</dbReference>
<dbReference type="SMR" id="Q9D428"/>
<dbReference type="CORUM" id="Q9D428"/>
<dbReference type="FunCoup" id="Q9D428">
    <property type="interactions" value="50"/>
</dbReference>
<dbReference type="IntAct" id="Q9D428">
    <property type="interactions" value="1"/>
</dbReference>
<dbReference type="STRING" id="10090.ENSMUSP00000112575"/>
<dbReference type="PhosphoSitePlus" id="Q9D428"/>
<dbReference type="SwissPalm" id="Q9D428"/>
<dbReference type="jPOST" id="Q9D428"/>
<dbReference type="PaxDb" id="10090-ENSMUSP00000112575"/>
<dbReference type="PeptideAtlas" id="Q9D428"/>
<dbReference type="ProteomicsDB" id="267741"/>
<dbReference type="Antibodypedia" id="31009">
    <property type="antibodies" value="57 antibodies from 12 providers"/>
</dbReference>
<dbReference type="DNASU" id="71146"/>
<dbReference type="Ensembl" id="ENSMUST00000087123.6">
    <property type="protein sequence ID" value="ENSMUSP00000084362.6"/>
    <property type="gene ID" value="ENSMUSG00000042532.15"/>
</dbReference>
<dbReference type="Ensembl" id="ENSMUST00000122375.8">
    <property type="protein sequence ID" value="ENSMUSP00000112575.2"/>
    <property type="gene ID" value="ENSMUSG00000042532.15"/>
</dbReference>
<dbReference type="GeneID" id="71146"/>
<dbReference type="KEGG" id="mmu:71146"/>
<dbReference type="UCSC" id="uc008hnm.2">
    <property type="organism name" value="mouse"/>
</dbReference>
<dbReference type="AGR" id="MGI:1918396"/>
<dbReference type="CTD" id="401647"/>
<dbReference type="MGI" id="MGI:1918396">
    <property type="gene designation" value="Golga7b"/>
</dbReference>
<dbReference type="VEuPathDB" id="HostDB:ENSMUSG00000042532"/>
<dbReference type="eggNOG" id="KOG4069">
    <property type="taxonomic scope" value="Eukaryota"/>
</dbReference>
<dbReference type="GeneTree" id="ENSGT00390000000134"/>
<dbReference type="HOGENOM" id="CLU_130071_0_1_1"/>
<dbReference type="InParanoid" id="Q9D428"/>
<dbReference type="OMA" id="FIYICTE"/>
<dbReference type="OrthoDB" id="2190159at2759"/>
<dbReference type="PhylomeDB" id="Q9D428"/>
<dbReference type="TreeFam" id="TF313115"/>
<dbReference type="BioGRID-ORCS" id="71146">
    <property type="hits" value="1 hit in 79 CRISPR screens"/>
</dbReference>
<dbReference type="CD-CODE" id="CE726F99">
    <property type="entry name" value="Postsynaptic density"/>
</dbReference>
<dbReference type="ChiTaRS" id="Golga7b">
    <property type="organism name" value="mouse"/>
</dbReference>
<dbReference type="PRO" id="PR:Q9D428"/>
<dbReference type="Proteomes" id="UP000000589">
    <property type="component" value="Chromosome 19"/>
</dbReference>
<dbReference type="RNAct" id="Q9D428">
    <property type="molecule type" value="protein"/>
</dbReference>
<dbReference type="Bgee" id="ENSMUSG00000042532">
    <property type="expression patterns" value="Expressed in visual cortex and 89 other cell types or tissues"/>
</dbReference>
<dbReference type="GO" id="GO:0000139">
    <property type="term" value="C:Golgi membrane"/>
    <property type="evidence" value="ECO:0007669"/>
    <property type="project" value="UniProtKB-SubCell"/>
</dbReference>
<dbReference type="GO" id="GO:0005886">
    <property type="term" value="C:plasma membrane"/>
    <property type="evidence" value="ECO:0007669"/>
    <property type="project" value="UniProtKB-SubCell"/>
</dbReference>
<dbReference type="GO" id="GO:0019899">
    <property type="term" value="F:enzyme binding"/>
    <property type="evidence" value="ECO:0000353"/>
    <property type="project" value="UniProtKB"/>
</dbReference>
<dbReference type="InterPro" id="IPR019383">
    <property type="entry name" value="Golgin_A_7/ERF4"/>
</dbReference>
<dbReference type="InterPro" id="IPR051371">
    <property type="entry name" value="Ras_palmitoyltransferase"/>
</dbReference>
<dbReference type="PANTHER" id="PTHR13254">
    <property type="entry name" value="GOLGI AUTOANTIGEN, GOLGIN SUBFAMILY A, 7"/>
    <property type="match status" value="1"/>
</dbReference>
<dbReference type="PANTHER" id="PTHR13254:SF2">
    <property type="entry name" value="GOLGIN SUBFAMILY A MEMBER 7B"/>
    <property type="match status" value="1"/>
</dbReference>
<dbReference type="Pfam" id="PF10256">
    <property type="entry name" value="Erf4"/>
    <property type="match status" value="1"/>
</dbReference>